<name>ACDG_METKA</name>
<evidence type="ECO:0000255" key="1">
    <source>
        <dbReference type="HAMAP-Rule" id="MF_01136"/>
    </source>
</evidence>
<evidence type="ECO:0000255" key="2">
    <source>
        <dbReference type="PROSITE-ProRule" id="PRU00989"/>
    </source>
</evidence>
<reference key="1">
    <citation type="journal article" date="2002" name="Proc. Natl. Acad. Sci. U.S.A.">
        <title>The complete genome of hyperthermophile Methanopyrus kandleri AV19 and monophyly of archaeal methanogens.</title>
        <authorList>
            <person name="Slesarev A.I."/>
            <person name="Mezhevaya K.V."/>
            <person name="Makarova K.S."/>
            <person name="Polushin N.N."/>
            <person name="Shcherbinina O.V."/>
            <person name="Shakhova V.V."/>
            <person name="Belova G.I."/>
            <person name="Aravind L."/>
            <person name="Natale D.A."/>
            <person name="Rogozin I.B."/>
            <person name="Tatusov R.L."/>
            <person name="Wolf Y.I."/>
            <person name="Stetter K.O."/>
            <person name="Malykh A.G."/>
            <person name="Koonin E.V."/>
            <person name="Kozyavkin S.A."/>
        </authorList>
    </citation>
    <scope>NUCLEOTIDE SEQUENCE [LARGE SCALE GENOMIC DNA]</scope>
    <source>
        <strain>AV19 / DSM 6324 / JCM 9639 / NBRC 100938</strain>
    </source>
</reference>
<accession>Q8TXF1</accession>
<keyword id="KW-0004">4Fe-4S</keyword>
<keyword id="KW-0170">Cobalt</keyword>
<keyword id="KW-0408">Iron</keyword>
<keyword id="KW-0411">Iron-sulfur</keyword>
<keyword id="KW-0479">Metal-binding</keyword>
<keyword id="KW-0489">Methyltransferase</keyword>
<keyword id="KW-1185">Reference proteome</keyword>
<keyword id="KW-0808">Transferase</keyword>
<dbReference type="EC" id="2.1.1.245" evidence="1"/>
<dbReference type="EMBL" id="AE009439">
    <property type="protein sequence ID" value="AAM01937.1"/>
    <property type="molecule type" value="Genomic_DNA"/>
</dbReference>
<dbReference type="RefSeq" id="WP_011019092.1">
    <property type="nucleotide sequence ID" value="NC_003551.1"/>
</dbReference>
<dbReference type="SMR" id="Q8TXF1"/>
<dbReference type="FunCoup" id="Q8TXF1">
    <property type="interactions" value="63"/>
</dbReference>
<dbReference type="STRING" id="190192.MK0723"/>
<dbReference type="PaxDb" id="190192-MK0723"/>
<dbReference type="EnsemblBacteria" id="AAM01937">
    <property type="protein sequence ID" value="AAM01937"/>
    <property type="gene ID" value="MK0723"/>
</dbReference>
<dbReference type="GeneID" id="1476824"/>
<dbReference type="KEGG" id="mka:MK0723"/>
<dbReference type="PATRIC" id="fig|190192.8.peg.764"/>
<dbReference type="HOGENOM" id="CLU_050002_0_0_2"/>
<dbReference type="InParanoid" id="Q8TXF1"/>
<dbReference type="Proteomes" id="UP000001826">
    <property type="component" value="Chromosome"/>
</dbReference>
<dbReference type="GO" id="GO:0051539">
    <property type="term" value="F:4 iron, 4 sulfur cluster binding"/>
    <property type="evidence" value="ECO:0007669"/>
    <property type="project" value="UniProtKB-KW"/>
</dbReference>
<dbReference type="GO" id="GO:0005506">
    <property type="term" value="F:iron ion binding"/>
    <property type="evidence" value="ECO:0007669"/>
    <property type="project" value="UniProtKB-UniRule"/>
</dbReference>
<dbReference type="GO" id="GO:0008168">
    <property type="term" value="F:methyltransferase activity"/>
    <property type="evidence" value="ECO:0007669"/>
    <property type="project" value="UniProtKB-UniRule"/>
</dbReference>
<dbReference type="GO" id="GO:0046356">
    <property type="term" value="P:acetyl-CoA catabolic process"/>
    <property type="evidence" value="ECO:0007669"/>
    <property type="project" value="InterPro"/>
</dbReference>
<dbReference type="GO" id="GO:0032259">
    <property type="term" value="P:methylation"/>
    <property type="evidence" value="ECO:0007669"/>
    <property type="project" value="UniProtKB-KW"/>
</dbReference>
<dbReference type="Gene3D" id="3.40.50.11600">
    <property type="match status" value="1"/>
</dbReference>
<dbReference type="Gene3D" id="3.20.20.20">
    <property type="entry name" value="Dihydropteroate synthase-like"/>
    <property type="match status" value="1"/>
</dbReference>
<dbReference type="HAMAP" id="MF_01136">
    <property type="entry name" value="CdhE"/>
    <property type="match status" value="1"/>
</dbReference>
<dbReference type="InterPro" id="IPR007202">
    <property type="entry name" value="4Fe-4S_dom"/>
</dbReference>
<dbReference type="InterPro" id="IPR016041">
    <property type="entry name" value="Ac-CoA_synth_d_su_TIM-brl"/>
</dbReference>
<dbReference type="InterPro" id="IPR051069">
    <property type="entry name" value="ACDS_complex_subunit"/>
</dbReference>
<dbReference type="InterPro" id="IPR016218">
    <property type="entry name" value="AcylCoA_decarb/synth_gsu"/>
</dbReference>
<dbReference type="InterPro" id="IPR023427">
    <property type="entry name" value="AcylCoA_decarb/synth_gsu_arc"/>
</dbReference>
<dbReference type="InterPro" id="IPR011005">
    <property type="entry name" value="Dihydropteroate_synth-like_sf"/>
</dbReference>
<dbReference type="NCBIfam" id="NF003195">
    <property type="entry name" value="PRK04165.1"/>
    <property type="match status" value="1"/>
</dbReference>
<dbReference type="PANTHER" id="PTHR36214">
    <property type="match status" value="1"/>
</dbReference>
<dbReference type="PANTHER" id="PTHR36214:SF3">
    <property type="entry name" value="ACETYL-COA DECARBONYLASE_SYNTHASE COMPLEX SUBUNIT GAMMA"/>
    <property type="match status" value="1"/>
</dbReference>
<dbReference type="Pfam" id="PF03599">
    <property type="entry name" value="CdhD"/>
    <property type="match status" value="1"/>
</dbReference>
<dbReference type="Pfam" id="PF04060">
    <property type="entry name" value="FeS"/>
    <property type="match status" value="1"/>
</dbReference>
<dbReference type="PIRSF" id="PIRSF000376">
    <property type="entry name" value="AcCoA_decarb_gamma"/>
    <property type="match status" value="1"/>
</dbReference>
<dbReference type="SUPFAM" id="SSF51717">
    <property type="entry name" value="Dihydropteroate synthetase-like"/>
    <property type="match status" value="1"/>
</dbReference>
<dbReference type="PROSITE" id="PS51656">
    <property type="entry name" value="4FE4S"/>
    <property type="match status" value="1"/>
</dbReference>
<organism>
    <name type="scientific">Methanopyrus kandleri (strain AV19 / DSM 6324 / JCM 9639 / NBRC 100938)</name>
    <dbReference type="NCBI Taxonomy" id="190192"/>
    <lineage>
        <taxon>Archaea</taxon>
        <taxon>Methanobacteriati</taxon>
        <taxon>Methanobacteriota</taxon>
        <taxon>Methanomada group</taxon>
        <taxon>Methanopyri</taxon>
        <taxon>Methanopyrales</taxon>
        <taxon>Methanopyraceae</taxon>
        <taxon>Methanopyrus</taxon>
    </lineage>
</organism>
<comment type="function">
    <text evidence="1">Part of a complex that catalyzes the reversible cleavage of acetyl-CoA, allowing autotrophic growth from CO(2).</text>
</comment>
<comment type="catalytic activity">
    <reaction evidence="1">
        <text>5,6,7,8-tetrahydrosarcinapterin + methyl-Co(III)-[corrinoid Fe-S protein] = 5-methyltetrahydrosarcinapterin + Co(I)-[corrinoid Fe-S protein] + H(+)</text>
        <dbReference type="Rhea" id="RHEA:45196"/>
        <dbReference type="Rhea" id="RHEA-COMP:11110"/>
        <dbReference type="Rhea" id="RHEA-COMP:11111"/>
        <dbReference type="ChEBI" id="CHEBI:15378"/>
        <dbReference type="ChEBI" id="CHEBI:59924"/>
        <dbReference type="ChEBI" id="CHEBI:64267"/>
        <dbReference type="ChEBI" id="CHEBI:85033"/>
        <dbReference type="ChEBI" id="CHEBI:85035"/>
        <dbReference type="EC" id="2.1.1.245"/>
    </reaction>
</comment>
<comment type="cofactor">
    <cofactor evidence="1">
        <name>corrinoid</name>
        <dbReference type="ChEBI" id="CHEBI:33913"/>
    </cofactor>
</comment>
<comment type="cofactor">
    <cofactor evidence="1">
        <name>[4Fe-4S] cluster</name>
        <dbReference type="ChEBI" id="CHEBI:49883"/>
    </cofactor>
    <text evidence="1">Binds 1 [4Fe-4S] cluster.</text>
</comment>
<comment type="subunit">
    <text evidence="1">Heterodimer of delta and gamma chains. The ACDS complex is made up of alpha, epsilon, beta, gamma and delta chains with a probable stoichiometry of (alpha(2)epsilon(2))(4)-beta(8)-(gamma(1)delta(1))(8).</text>
</comment>
<proteinExistence type="inferred from homology"/>
<feature type="chain" id="PRO_0000155121" description="Acetyl-CoA decarbonylase/synthase complex subunit gamma">
    <location>
        <begin position="1"/>
        <end position="462"/>
    </location>
</feature>
<feature type="domain" description="4Fe-4S" evidence="2">
    <location>
        <begin position="1"/>
        <end position="60"/>
    </location>
</feature>
<feature type="binding site" evidence="1">
    <location>
        <position position="18"/>
    </location>
    <ligand>
        <name>[4Fe-4S] cluster</name>
        <dbReference type="ChEBI" id="CHEBI:49883"/>
    </ligand>
</feature>
<feature type="binding site" evidence="1">
    <location>
        <position position="21"/>
    </location>
    <ligand>
        <name>[4Fe-4S] cluster</name>
        <dbReference type="ChEBI" id="CHEBI:49883"/>
    </ligand>
</feature>
<feature type="binding site" evidence="1">
    <location>
        <position position="26"/>
    </location>
    <ligand>
        <name>[4Fe-4S] cluster</name>
        <dbReference type="ChEBI" id="CHEBI:49883"/>
    </ligand>
</feature>
<feature type="binding site" evidence="1">
    <location>
        <position position="43"/>
    </location>
    <ligand>
        <name>[4Fe-4S] cluster</name>
        <dbReference type="ChEBI" id="CHEBI:49883"/>
    </ligand>
</feature>
<sequence length="462" mass="50852">MAQLSAMDVYNLLPKANCGACGCKTCMEFATKLVNREAKPEDCPKLDDESLEKLQELLAPPVKELTIGEGDREVTVGGDEVMFRHELSFFNPPPVFVTVYDDMEEDEIAGKTEEIQEFQVERVGEVLKLDGVAVVSRTGDPEKYARAVEIAVERSEDLAVALITTDPKVMEAGLDVFDERPLLYPATEENVEDLAKLAADGDCPLGLHARDVEDLVPLVVEAQQYTDDLLLDPGTEFGPHDVVSTTDKLAEIRKAAIEEFESFGYPTLVTTFPYAFLEDDPVKAARRESYLASACVLRYADILIMDTVEPWALLPVLTQRQCVYTDPREPQEVEPGLYRIGDPDENSPVLVTTNFTLTYHCVAGDLESADIDCWLLVIDTGGLAVDVSVAGGQFTGEAVKEVIEETDIEDKVEHRVLVIPGKAAAVKGDVEDATGWDVMIGTQDSSELPEFLEKEGLLRIEE</sequence>
<gene>
    <name evidence="1" type="primary">cdhE</name>
    <name type="ordered locus">MK0723</name>
</gene>
<protein>
    <recommendedName>
        <fullName evidence="1">Acetyl-CoA decarbonylase/synthase complex subunit gamma</fullName>
        <shortName evidence="1">ACDS complex subunit gamma</shortName>
        <ecNumber evidence="1">2.1.1.245</ecNumber>
    </recommendedName>
    <alternativeName>
        <fullName evidence="1">5-methyltetrahydrosarcinapterin:corrinoid/iron-sulfur protein Co-methyltransferase</fullName>
    </alternativeName>
    <alternativeName>
        <fullName evidence="1">ACDS complex methyltransferase</fullName>
    </alternativeName>
    <alternativeName>
        <fullName evidence="1">Corrinoid/iron-sulfur component large subunit</fullName>
    </alternativeName>
</protein>